<sequence length="96" mass="10661">MKLRPLHDRVVVRRVKEEEKTKGGIIIPDNAKEKPQEGIIVAVGNGAIGDDNERVPLDVKKGDRVLFGKWSGTEVKIDGEDLLIMKESDIMGILDK</sequence>
<accession>Q0C0T1</accession>
<dbReference type="EMBL" id="CP000158">
    <property type="protein sequence ID" value="ABI75989.1"/>
    <property type="molecule type" value="Genomic_DNA"/>
</dbReference>
<dbReference type="RefSeq" id="WP_011646962.1">
    <property type="nucleotide sequence ID" value="NC_008358.1"/>
</dbReference>
<dbReference type="SMR" id="Q0C0T1"/>
<dbReference type="STRING" id="228405.HNE_1961"/>
<dbReference type="KEGG" id="hne:HNE_1961"/>
<dbReference type="eggNOG" id="COG0234">
    <property type="taxonomic scope" value="Bacteria"/>
</dbReference>
<dbReference type="HOGENOM" id="CLU_132825_1_0_5"/>
<dbReference type="Proteomes" id="UP000001959">
    <property type="component" value="Chromosome"/>
</dbReference>
<dbReference type="GO" id="GO:0005737">
    <property type="term" value="C:cytoplasm"/>
    <property type="evidence" value="ECO:0007669"/>
    <property type="project" value="UniProtKB-SubCell"/>
</dbReference>
<dbReference type="GO" id="GO:0005524">
    <property type="term" value="F:ATP binding"/>
    <property type="evidence" value="ECO:0007669"/>
    <property type="project" value="InterPro"/>
</dbReference>
<dbReference type="GO" id="GO:0046872">
    <property type="term" value="F:metal ion binding"/>
    <property type="evidence" value="ECO:0007669"/>
    <property type="project" value="TreeGrafter"/>
</dbReference>
<dbReference type="GO" id="GO:0044183">
    <property type="term" value="F:protein folding chaperone"/>
    <property type="evidence" value="ECO:0007669"/>
    <property type="project" value="InterPro"/>
</dbReference>
<dbReference type="GO" id="GO:0051087">
    <property type="term" value="F:protein-folding chaperone binding"/>
    <property type="evidence" value="ECO:0007669"/>
    <property type="project" value="TreeGrafter"/>
</dbReference>
<dbReference type="GO" id="GO:0051082">
    <property type="term" value="F:unfolded protein binding"/>
    <property type="evidence" value="ECO:0007669"/>
    <property type="project" value="TreeGrafter"/>
</dbReference>
<dbReference type="GO" id="GO:0051085">
    <property type="term" value="P:chaperone cofactor-dependent protein refolding"/>
    <property type="evidence" value="ECO:0007669"/>
    <property type="project" value="TreeGrafter"/>
</dbReference>
<dbReference type="CDD" id="cd00320">
    <property type="entry name" value="cpn10"/>
    <property type="match status" value="1"/>
</dbReference>
<dbReference type="FunFam" id="2.30.33.40:FF:000001">
    <property type="entry name" value="10 kDa chaperonin"/>
    <property type="match status" value="1"/>
</dbReference>
<dbReference type="Gene3D" id="2.30.33.40">
    <property type="entry name" value="GroES chaperonin"/>
    <property type="match status" value="1"/>
</dbReference>
<dbReference type="HAMAP" id="MF_00580">
    <property type="entry name" value="CH10"/>
    <property type="match status" value="1"/>
</dbReference>
<dbReference type="InterPro" id="IPR020818">
    <property type="entry name" value="Chaperonin_GroES"/>
</dbReference>
<dbReference type="InterPro" id="IPR037124">
    <property type="entry name" value="Chaperonin_GroES_sf"/>
</dbReference>
<dbReference type="InterPro" id="IPR018369">
    <property type="entry name" value="Chaprnonin_Cpn10_CS"/>
</dbReference>
<dbReference type="InterPro" id="IPR011032">
    <property type="entry name" value="GroES-like_sf"/>
</dbReference>
<dbReference type="NCBIfam" id="NF001527">
    <property type="entry name" value="PRK00364.1-2"/>
    <property type="match status" value="1"/>
</dbReference>
<dbReference type="NCBIfam" id="NF001529">
    <property type="entry name" value="PRK00364.1-5"/>
    <property type="match status" value="1"/>
</dbReference>
<dbReference type="NCBIfam" id="NF001531">
    <property type="entry name" value="PRK00364.2-2"/>
    <property type="match status" value="1"/>
</dbReference>
<dbReference type="NCBIfam" id="NF001533">
    <property type="entry name" value="PRK00364.2-4"/>
    <property type="match status" value="1"/>
</dbReference>
<dbReference type="NCBIfam" id="NF001534">
    <property type="entry name" value="PRK00364.2-5"/>
    <property type="match status" value="1"/>
</dbReference>
<dbReference type="PANTHER" id="PTHR10772">
    <property type="entry name" value="10 KDA HEAT SHOCK PROTEIN"/>
    <property type="match status" value="1"/>
</dbReference>
<dbReference type="PANTHER" id="PTHR10772:SF58">
    <property type="entry name" value="CO-CHAPERONIN GROES"/>
    <property type="match status" value="1"/>
</dbReference>
<dbReference type="Pfam" id="PF00166">
    <property type="entry name" value="Cpn10"/>
    <property type="match status" value="1"/>
</dbReference>
<dbReference type="PRINTS" id="PR00297">
    <property type="entry name" value="CHAPERONIN10"/>
</dbReference>
<dbReference type="SMART" id="SM00883">
    <property type="entry name" value="Cpn10"/>
    <property type="match status" value="1"/>
</dbReference>
<dbReference type="SUPFAM" id="SSF50129">
    <property type="entry name" value="GroES-like"/>
    <property type="match status" value="1"/>
</dbReference>
<dbReference type="PROSITE" id="PS00681">
    <property type="entry name" value="CHAPERONINS_CPN10"/>
    <property type="match status" value="1"/>
</dbReference>
<name>CH10_HYPNA</name>
<keyword id="KW-0143">Chaperone</keyword>
<keyword id="KW-0963">Cytoplasm</keyword>
<keyword id="KW-1185">Reference proteome</keyword>
<protein>
    <recommendedName>
        <fullName evidence="1">Co-chaperonin GroES</fullName>
    </recommendedName>
    <alternativeName>
        <fullName evidence="1">10 kDa chaperonin</fullName>
    </alternativeName>
    <alternativeName>
        <fullName evidence="1">Chaperonin-10</fullName>
        <shortName evidence="1">Cpn10</shortName>
    </alternativeName>
</protein>
<evidence type="ECO:0000255" key="1">
    <source>
        <dbReference type="HAMAP-Rule" id="MF_00580"/>
    </source>
</evidence>
<proteinExistence type="inferred from homology"/>
<reference key="1">
    <citation type="journal article" date="2006" name="J. Bacteriol.">
        <title>Comparative genomic evidence for a close relationship between the dimorphic prosthecate bacteria Hyphomonas neptunium and Caulobacter crescentus.</title>
        <authorList>
            <person name="Badger J.H."/>
            <person name="Hoover T.R."/>
            <person name="Brun Y.V."/>
            <person name="Weiner R.M."/>
            <person name="Laub M.T."/>
            <person name="Alexandre G."/>
            <person name="Mrazek J."/>
            <person name="Ren Q."/>
            <person name="Paulsen I.T."/>
            <person name="Nelson K.E."/>
            <person name="Khouri H.M."/>
            <person name="Radune D."/>
            <person name="Sosa J."/>
            <person name="Dodson R.J."/>
            <person name="Sullivan S.A."/>
            <person name="Rosovitz M.J."/>
            <person name="Madupu R."/>
            <person name="Brinkac L.M."/>
            <person name="Durkin A.S."/>
            <person name="Daugherty S.C."/>
            <person name="Kothari S.P."/>
            <person name="Giglio M.G."/>
            <person name="Zhou L."/>
            <person name="Haft D.H."/>
            <person name="Selengut J.D."/>
            <person name="Davidsen T.M."/>
            <person name="Yang Q."/>
            <person name="Zafar N."/>
            <person name="Ward N.L."/>
        </authorList>
    </citation>
    <scope>NUCLEOTIDE SEQUENCE [LARGE SCALE GENOMIC DNA]</scope>
    <source>
        <strain>ATCC 15444</strain>
    </source>
</reference>
<comment type="function">
    <text evidence="1">Together with the chaperonin GroEL, plays an essential role in assisting protein folding. The GroEL-GroES system forms a nano-cage that allows encapsulation of the non-native substrate proteins and provides a physical environment optimized to promote and accelerate protein folding. GroES binds to the apical surface of the GroEL ring, thereby capping the opening of the GroEL channel.</text>
</comment>
<comment type="subunit">
    <text evidence="1">Heptamer of 7 subunits arranged in a ring. Interacts with the chaperonin GroEL.</text>
</comment>
<comment type="subcellular location">
    <subcellularLocation>
        <location evidence="1">Cytoplasm</location>
    </subcellularLocation>
</comment>
<comment type="similarity">
    <text evidence="1">Belongs to the GroES chaperonin family.</text>
</comment>
<gene>
    <name evidence="1" type="primary">groES</name>
    <name evidence="1" type="synonym">groS</name>
    <name type="ordered locus">HNE_1961</name>
</gene>
<organism>
    <name type="scientific">Hyphomonas neptunium (strain ATCC 15444)</name>
    <dbReference type="NCBI Taxonomy" id="228405"/>
    <lineage>
        <taxon>Bacteria</taxon>
        <taxon>Pseudomonadati</taxon>
        <taxon>Pseudomonadota</taxon>
        <taxon>Alphaproteobacteria</taxon>
        <taxon>Hyphomonadales</taxon>
        <taxon>Hyphomonadaceae</taxon>
        <taxon>Hyphomonas</taxon>
    </lineage>
</organism>
<feature type="chain" id="PRO_1000025275" description="Co-chaperonin GroES">
    <location>
        <begin position="1"/>
        <end position="96"/>
    </location>
</feature>